<proteinExistence type="inferred from homology"/>
<gene>
    <name type="ordered locus">sll1164</name>
</gene>
<sequence length="349" mass="38558">MKHVFSGFQTFLKQVHSPIYLALAVVIFSAANPVTSRIIELGKTYEINGRNPISFCNVLFVGNLCALGLMILIFHPDWQLHKLRKLTRKDWFLLTVTAILSRAIAPGLMFSALEKTNVTNVVLIGRLEPVFTLILSILLLKISVNWLSMVATLISFVGVAVTVFWGVADPLDMVINFDFGLGESFVAIAAFISAITTILSKQQLQSIPVGIFTVYRSLLGTFVFFWIAVIIYGFDHFMDVSSPILWRWMLIYGAIIVVVGQVAWLAGLKNASFIQINLASLVTPILAIIFAYLILLETPTNAQYLGGILLLLGAILSFIDNLKTAKDKQASKPLNSREAMDTNVGFRGV</sequence>
<accession>P73771</accession>
<keyword id="KW-1003">Cell membrane</keyword>
<keyword id="KW-0472">Membrane</keyword>
<keyword id="KW-1185">Reference proteome</keyword>
<keyword id="KW-0677">Repeat</keyword>
<keyword id="KW-0812">Transmembrane</keyword>
<keyword id="KW-1133">Transmembrane helix</keyword>
<keyword id="KW-0813">Transport</keyword>
<evidence type="ECO:0000255" key="1"/>
<evidence type="ECO:0000305" key="2"/>
<feature type="chain" id="PRO_0000108196" description="Uncharacterized transporter sll1164">
    <location>
        <begin position="1"/>
        <end position="349"/>
    </location>
</feature>
<feature type="transmembrane region" description="Helical" evidence="1">
    <location>
        <begin position="15"/>
        <end position="35"/>
    </location>
</feature>
<feature type="transmembrane region" description="Helical" evidence="1">
    <location>
        <begin position="53"/>
        <end position="73"/>
    </location>
</feature>
<feature type="transmembrane region" description="Helical" evidence="1">
    <location>
        <begin position="91"/>
        <end position="111"/>
    </location>
</feature>
<feature type="transmembrane region" description="Helical" evidence="1">
    <location>
        <begin position="120"/>
        <end position="140"/>
    </location>
</feature>
<feature type="transmembrane region" description="Helical" evidence="1">
    <location>
        <begin position="147"/>
        <end position="167"/>
    </location>
</feature>
<feature type="transmembrane region" description="Helical" evidence="1">
    <location>
        <begin position="179"/>
        <end position="199"/>
    </location>
</feature>
<feature type="transmembrane region" description="Helical" evidence="1">
    <location>
        <begin position="218"/>
        <end position="238"/>
    </location>
</feature>
<feature type="transmembrane region" description="Helical" evidence="1">
    <location>
        <begin position="248"/>
        <end position="268"/>
    </location>
</feature>
<feature type="transmembrane region" description="Helical" evidence="1">
    <location>
        <begin position="276"/>
        <end position="296"/>
    </location>
</feature>
<feature type="transmembrane region" description="Helical" evidence="1">
    <location>
        <begin position="302"/>
        <end position="322"/>
    </location>
</feature>
<feature type="domain" description="EamA 1">
    <location>
        <begin position="39"/>
        <end position="164"/>
    </location>
</feature>
<feature type="domain" description="EamA 2">
    <location>
        <begin position="191"/>
        <end position="319"/>
    </location>
</feature>
<dbReference type="EMBL" id="BA000022">
    <property type="protein sequence ID" value="BAA17823.1"/>
    <property type="molecule type" value="Genomic_DNA"/>
</dbReference>
<dbReference type="PIR" id="S74862">
    <property type="entry name" value="S74862"/>
</dbReference>
<dbReference type="SMR" id="P73771"/>
<dbReference type="STRING" id="1148.gene:10498691"/>
<dbReference type="PaxDb" id="1148-1652905"/>
<dbReference type="EnsemblBacteria" id="BAA17823">
    <property type="protein sequence ID" value="BAA17823"/>
    <property type="gene ID" value="BAA17823"/>
</dbReference>
<dbReference type="KEGG" id="syn:sll1164"/>
<dbReference type="eggNOG" id="COG0697">
    <property type="taxonomic scope" value="Bacteria"/>
</dbReference>
<dbReference type="InParanoid" id="P73771"/>
<dbReference type="PhylomeDB" id="P73771"/>
<dbReference type="Proteomes" id="UP000001425">
    <property type="component" value="Chromosome"/>
</dbReference>
<dbReference type="GO" id="GO:0016020">
    <property type="term" value="C:membrane"/>
    <property type="evidence" value="ECO:0000318"/>
    <property type="project" value="GO_Central"/>
</dbReference>
<dbReference type="GO" id="GO:0005886">
    <property type="term" value="C:plasma membrane"/>
    <property type="evidence" value="ECO:0007669"/>
    <property type="project" value="UniProtKB-SubCell"/>
</dbReference>
<dbReference type="InterPro" id="IPR050638">
    <property type="entry name" value="AA-Vitamin_Transporters"/>
</dbReference>
<dbReference type="InterPro" id="IPR000620">
    <property type="entry name" value="EamA_dom"/>
</dbReference>
<dbReference type="PANTHER" id="PTHR32322">
    <property type="entry name" value="INNER MEMBRANE TRANSPORTER"/>
    <property type="match status" value="1"/>
</dbReference>
<dbReference type="PANTHER" id="PTHR32322:SF18">
    <property type="entry name" value="S-ADENOSYLMETHIONINE_S-ADENOSYLHOMOCYSTEINE TRANSPORTER"/>
    <property type="match status" value="1"/>
</dbReference>
<dbReference type="Pfam" id="PF00892">
    <property type="entry name" value="EamA"/>
    <property type="match status" value="2"/>
</dbReference>
<dbReference type="SUPFAM" id="SSF103481">
    <property type="entry name" value="Multidrug resistance efflux transporter EmrE"/>
    <property type="match status" value="2"/>
</dbReference>
<comment type="subcellular location">
    <subcellularLocation>
        <location evidence="2">Cell membrane</location>
        <topology evidence="2">Multi-pass membrane protein</topology>
    </subcellularLocation>
</comment>
<comment type="similarity">
    <text evidence="2">Belongs to the EamA transporter family.</text>
</comment>
<protein>
    <recommendedName>
        <fullName>Uncharacterized transporter sll1164</fullName>
    </recommendedName>
</protein>
<reference key="1">
    <citation type="journal article" date="1996" name="DNA Res.">
        <title>Sequence analysis of the genome of the unicellular cyanobacterium Synechocystis sp. strain PCC6803. II. Sequence determination of the entire genome and assignment of potential protein-coding regions.</title>
        <authorList>
            <person name="Kaneko T."/>
            <person name="Sato S."/>
            <person name="Kotani H."/>
            <person name="Tanaka A."/>
            <person name="Asamizu E."/>
            <person name="Nakamura Y."/>
            <person name="Miyajima N."/>
            <person name="Hirosawa M."/>
            <person name="Sugiura M."/>
            <person name="Sasamoto S."/>
            <person name="Kimura T."/>
            <person name="Hosouchi T."/>
            <person name="Matsuno A."/>
            <person name="Muraki A."/>
            <person name="Nakazaki N."/>
            <person name="Naruo K."/>
            <person name="Okumura S."/>
            <person name="Shimpo S."/>
            <person name="Takeuchi C."/>
            <person name="Wada T."/>
            <person name="Watanabe A."/>
            <person name="Yamada M."/>
            <person name="Yasuda M."/>
            <person name="Tabata S."/>
        </authorList>
    </citation>
    <scope>NUCLEOTIDE SEQUENCE [LARGE SCALE GENOMIC DNA]</scope>
    <source>
        <strain>ATCC 27184 / PCC 6803 / Kazusa</strain>
    </source>
</reference>
<organism>
    <name type="scientific">Synechocystis sp. (strain ATCC 27184 / PCC 6803 / Kazusa)</name>
    <dbReference type="NCBI Taxonomy" id="1111708"/>
    <lineage>
        <taxon>Bacteria</taxon>
        <taxon>Bacillati</taxon>
        <taxon>Cyanobacteriota</taxon>
        <taxon>Cyanophyceae</taxon>
        <taxon>Synechococcales</taxon>
        <taxon>Merismopediaceae</taxon>
        <taxon>Synechocystis</taxon>
    </lineage>
</organism>
<name>Y1164_SYNY3</name>